<dbReference type="EC" id="2.5.1.7" evidence="1"/>
<dbReference type="EMBL" id="BX936398">
    <property type="protein sequence ID" value="CAH22751.1"/>
    <property type="molecule type" value="Genomic_DNA"/>
</dbReference>
<dbReference type="RefSeq" id="WP_002210127.1">
    <property type="nucleotide sequence ID" value="NZ_CP009712.1"/>
</dbReference>
<dbReference type="SMR" id="Q665K4"/>
<dbReference type="GeneID" id="57975146"/>
<dbReference type="KEGG" id="ypo:BZ17_3088"/>
<dbReference type="KEGG" id="yps:YPTB3513"/>
<dbReference type="PATRIC" id="fig|273123.14.peg.3235"/>
<dbReference type="UniPathway" id="UPA00219"/>
<dbReference type="Proteomes" id="UP000001011">
    <property type="component" value="Chromosome"/>
</dbReference>
<dbReference type="GO" id="GO:0005737">
    <property type="term" value="C:cytoplasm"/>
    <property type="evidence" value="ECO:0007669"/>
    <property type="project" value="UniProtKB-SubCell"/>
</dbReference>
<dbReference type="GO" id="GO:0008760">
    <property type="term" value="F:UDP-N-acetylglucosamine 1-carboxyvinyltransferase activity"/>
    <property type="evidence" value="ECO:0007669"/>
    <property type="project" value="UniProtKB-UniRule"/>
</dbReference>
<dbReference type="GO" id="GO:0051301">
    <property type="term" value="P:cell division"/>
    <property type="evidence" value="ECO:0007669"/>
    <property type="project" value="UniProtKB-KW"/>
</dbReference>
<dbReference type="GO" id="GO:0071555">
    <property type="term" value="P:cell wall organization"/>
    <property type="evidence" value="ECO:0007669"/>
    <property type="project" value="UniProtKB-KW"/>
</dbReference>
<dbReference type="GO" id="GO:0009252">
    <property type="term" value="P:peptidoglycan biosynthetic process"/>
    <property type="evidence" value="ECO:0007669"/>
    <property type="project" value="UniProtKB-UniRule"/>
</dbReference>
<dbReference type="GO" id="GO:0008360">
    <property type="term" value="P:regulation of cell shape"/>
    <property type="evidence" value="ECO:0007669"/>
    <property type="project" value="UniProtKB-KW"/>
</dbReference>
<dbReference type="GO" id="GO:0019277">
    <property type="term" value="P:UDP-N-acetylgalactosamine biosynthetic process"/>
    <property type="evidence" value="ECO:0007669"/>
    <property type="project" value="InterPro"/>
</dbReference>
<dbReference type="CDD" id="cd01555">
    <property type="entry name" value="UdpNAET"/>
    <property type="match status" value="1"/>
</dbReference>
<dbReference type="FunFam" id="3.65.10.10:FF:000002">
    <property type="entry name" value="UDP-N-acetylglucosamine 1-carboxyvinyltransferase"/>
    <property type="match status" value="1"/>
</dbReference>
<dbReference type="Gene3D" id="3.65.10.10">
    <property type="entry name" value="Enolpyruvate transferase domain"/>
    <property type="match status" value="2"/>
</dbReference>
<dbReference type="HAMAP" id="MF_00111">
    <property type="entry name" value="MurA"/>
    <property type="match status" value="1"/>
</dbReference>
<dbReference type="InterPro" id="IPR001986">
    <property type="entry name" value="Enolpyruvate_Tfrase_dom"/>
</dbReference>
<dbReference type="InterPro" id="IPR036968">
    <property type="entry name" value="Enolpyruvate_Tfrase_sf"/>
</dbReference>
<dbReference type="InterPro" id="IPR050068">
    <property type="entry name" value="MurA_subfamily"/>
</dbReference>
<dbReference type="InterPro" id="IPR013792">
    <property type="entry name" value="RNA3'P_cycl/enolpyr_Trfase_a/b"/>
</dbReference>
<dbReference type="InterPro" id="IPR005750">
    <property type="entry name" value="UDP_GlcNAc_COvinyl_MurA"/>
</dbReference>
<dbReference type="NCBIfam" id="TIGR01072">
    <property type="entry name" value="murA"/>
    <property type="match status" value="1"/>
</dbReference>
<dbReference type="NCBIfam" id="NF006873">
    <property type="entry name" value="PRK09369.1"/>
    <property type="match status" value="1"/>
</dbReference>
<dbReference type="PANTHER" id="PTHR43783">
    <property type="entry name" value="UDP-N-ACETYLGLUCOSAMINE 1-CARBOXYVINYLTRANSFERASE"/>
    <property type="match status" value="1"/>
</dbReference>
<dbReference type="PANTHER" id="PTHR43783:SF1">
    <property type="entry name" value="UDP-N-ACETYLGLUCOSAMINE 1-CARBOXYVINYLTRANSFERASE"/>
    <property type="match status" value="1"/>
</dbReference>
<dbReference type="Pfam" id="PF00275">
    <property type="entry name" value="EPSP_synthase"/>
    <property type="match status" value="1"/>
</dbReference>
<dbReference type="SUPFAM" id="SSF55205">
    <property type="entry name" value="EPT/RTPC-like"/>
    <property type="match status" value="1"/>
</dbReference>
<comment type="function">
    <text evidence="1">Cell wall formation. Adds enolpyruvyl to UDP-N-acetylglucosamine.</text>
</comment>
<comment type="catalytic activity">
    <reaction evidence="1">
        <text>phosphoenolpyruvate + UDP-N-acetyl-alpha-D-glucosamine = UDP-N-acetyl-3-O-(1-carboxyvinyl)-alpha-D-glucosamine + phosphate</text>
        <dbReference type="Rhea" id="RHEA:18681"/>
        <dbReference type="ChEBI" id="CHEBI:43474"/>
        <dbReference type="ChEBI" id="CHEBI:57705"/>
        <dbReference type="ChEBI" id="CHEBI:58702"/>
        <dbReference type="ChEBI" id="CHEBI:68483"/>
        <dbReference type="EC" id="2.5.1.7"/>
    </reaction>
</comment>
<comment type="pathway">
    <text evidence="1">Cell wall biogenesis; peptidoglycan biosynthesis.</text>
</comment>
<comment type="subcellular location">
    <subcellularLocation>
        <location evidence="1">Cytoplasm</location>
    </subcellularLocation>
</comment>
<comment type="similarity">
    <text evidence="1">Belongs to the EPSP synthase family. MurA subfamily.</text>
</comment>
<organism>
    <name type="scientific">Yersinia pseudotuberculosis serotype I (strain IP32953)</name>
    <dbReference type="NCBI Taxonomy" id="273123"/>
    <lineage>
        <taxon>Bacteria</taxon>
        <taxon>Pseudomonadati</taxon>
        <taxon>Pseudomonadota</taxon>
        <taxon>Gammaproteobacteria</taxon>
        <taxon>Enterobacterales</taxon>
        <taxon>Yersiniaceae</taxon>
        <taxon>Yersinia</taxon>
    </lineage>
</organism>
<proteinExistence type="inferred from homology"/>
<protein>
    <recommendedName>
        <fullName evidence="1">UDP-N-acetylglucosamine 1-carboxyvinyltransferase</fullName>
        <ecNumber evidence="1">2.5.1.7</ecNumber>
    </recommendedName>
    <alternativeName>
        <fullName evidence="1">Enoylpyruvate transferase</fullName>
    </alternativeName>
    <alternativeName>
        <fullName evidence="1">UDP-N-acetylglucosamine enolpyruvyl transferase</fullName>
        <shortName evidence="1">EPT</shortName>
    </alternativeName>
</protein>
<keyword id="KW-0131">Cell cycle</keyword>
<keyword id="KW-0132">Cell division</keyword>
<keyword id="KW-0133">Cell shape</keyword>
<keyword id="KW-0961">Cell wall biogenesis/degradation</keyword>
<keyword id="KW-0963">Cytoplasm</keyword>
<keyword id="KW-0573">Peptidoglycan synthesis</keyword>
<keyword id="KW-0670">Pyruvate</keyword>
<keyword id="KW-0808">Transferase</keyword>
<accession>Q665K4</accession>
<name>MURA_YERPS</name>
<evidence type="ECO:0000255" key="1">
    <source>
        <dbReference type="HAMAP-Rule" id="MF_00111"/>
    </source>
</evidence>
<reference key="1">
    <citation type="journal article" date="2004" name="Proc. Natl. Acad. Sci. U.S.A.">
        <title>Insights into the evolution of Yersinia pestis through whole-genome comparison with Yersinia pseudotuberculosis.</title>
        <authorList>
            <person name="Chain P.S.G."/>
            <person name="Carniel E."/>
            <person name="Larimer F.W."/>
            <person name="Lamerdin J."/>
            <person name="Stoutland P.O."/>
            <person name="Regala W.M."/>
            <person name="Georgescu A.M."/>
            <person name="Vergez L.M."/>
            <person name="Land M.L."/>
            <person name="Motin V.L."/>
            <person name="Brubaker R.R."/>
            <person name="Fowler J."/>
            <person name="Hinnebusch J."/>
            <person name="Marceau M."/>
            <person name="Medigue C."/>
            <person name="Simonet M."/>
            <person name="Chenal-Francisque V."/>
            <person name="Souza B."/>
            <person name="Dacheux D."/>
            <person name="Elliott J.M."/>
            <person name="Derbise A."/>
            <person name="Hauser L.J."/>
            <person name="Garcia E."/>
        </authorList>
    </citation>
    <scope>NUCLEOTIDE SEQUENCE [LARGE SCALE GENOMIC DNA]</scope>
    <source>
        <strain>IP32953</strain>
    </source>
</reference>
<feature type="chain" id="PRO_0000231304" description="UDP-N-acetylglucosamine 1-carboxyvinyltransferase">
    <location>
        <begin position="1"/>
        <end position="420"/>
    </location>
</feature>
<feature type="active site" description="Proton donor" evidence="1">
    <location>
        <position position="116"/>
    </location>
</feature>
<feature type="binding site" evidence="1">
    <location>
        <begin position="22"/>
        <end position="23"/>
    </location>
    <ligand>
        <name>phosphoenolpyruvate</name>
        <dbReference type="ChEBI" id="CHEBI:58702"/>
    </ligand>
</feature>
<feature type="binding site" evidence="1">
    <location>
        <position position="92"/>
    </location>
    <ligand>
        <name>UDP-N-acetyl-alpha-D-glucosamine</name>
        <dbReference type="ChEBI" id="CHEBI:57705"/>
    </ligand>
</feature>
<feature type="binding site" evidence="1">
    <location>
        <begin position="121"/>
        <end position="125"/>
    </location>
    <ligand>
        <name>UDP-N-acetyl-alpha-D-glucosamine</name>
        <dbReference type="ChEBI" id="CHEBI:57705"/>
    </ligand>
</feature>
<feature type="binding site" evidence="1">
    <location>
        <begin position="161"/>
        <end position="164"/>
    </location>
    <ligand>
        <name>UDP-N-acetyl-alpha-D-glucosamine</name>
        <dbReference type="ChEBI" id="CHEBI:57705"/>
    </ligand>
</feature>
<feature type="binding site" evidence="1">
    <location>
        <position position="306"/>
    </location>
    <ligand>
        <name>UDP-N-acetyl-alpha-D-glucosamine</name>
        <dbReference type="ChEBI" id="CHEBI:57705"/>
    </ligand>
</feature>
<feature type="binding site" evidence="1">
    <location>
        <position position="328"/>
    </location>
    <ligand>
        <name>UDP-N-acetyl-alpha-D-glucosamine</name>
        <dbReference type="ChEBI" id="CHEBI:57705"/>
    </ligand>
</feature>
<feature type="modified residue" description="2-(S-cysteinyl)pyruvic acid O-phosphothioketal" evidence="1">
    <location>
        <position position="116"/>
    </location>
</feature>
<gene>
    <name evidence="1" type="primary">murA</name>
    <name type="synonym">murZ</name>
    <name type="ordered locus">YPTB3513</name>
</gene>
<sequence length="420" mass="44845">MDKFRVQGRTRLSGEVTISGAKNAALPILFAALLAEEPVELQNVPKLKDIDTTIKLLSQLGTKIERNNGSVFVDASAVNEFCAPYDLVKTMRASIWALGPLVARFGQGQVSLPGGCAIGARPVDLHITGLEQLGAEIKLEEGYVKASVNGRLKGAHIVMDKVSVGATVTIMSAATLAEGTTVIENAAREPEIVDTANFLNTLGAKISGAGTDRITIEGVTRLGGGVYRVLPDRIETGTFLVAAAISGGKVVCRQTRPDTLDAVLAKLREAGADIEVGDDWISLDMQGKRPKAITFRTAPHPGFPTDMQAQFSLLNLVAEGTGVITETIFENRFMHVPELIRMGAHAEIESNTVICYGVEQLSGAQVMATDLRASASLVLAGCIAEGVTIVDRIYHIDRGYERIEDKLRALGAKIERVKGE</sequence>